<protein>
    <recommendedName>
        <fullName>ATP-dependent zinc metalloprotease FTSH 2, chloroplastic</fullName>
        <shortName>OsFTSH2</shortName>
        <ecNumber>3.4.24.-</ecNumber>
    </recommendedName>
</protein>
<proteinExistence type="inferred from homology"/>
<name>FTSH2_ORYSJ</name>
<gene>
    <name type="primary">FTSH2</name>
    <name type="ordered locus">Os06g0669400</name>
    <name type="ordered locus">LOC_Os06g45820</name>
    <name type="ORF">OsJ_021445</name>
    <name type="ORF">P0686E06.31-1</name>
    <name type="ORF">P0686E06.31-2</name>
</gene>
<dbReference type="EC" id="3.4.24.-"/>
<dbReference type="EMBL" id="AP003635">
    <property type="protein sequence ID" value="BAD45446.1"/>
    <property type="molecule type" value="Genomic_DNA"/>
</dbReference>
<dbReference type="EMBL" id="AP003635">
    <property type="protein sequence ID" value="BAD45447.1"/>
    <property type="molecule type" value="Genomic_DNA"/>
</dbReference>
<dbReference type="EMBL" id="AP014962">
    <property type="protein sequence ID" value="BAS99062.1"/>
    <property type="molecule type" value="Genomic_DNA"/>
</dbReference>
<dbReference type="EMBL" id="CM000143">
    <property type="protein sequence ID" value="EAZ37962.1"/>
    <property type="molecule type" value="Genomic_DNA"/>
</dbReference>
<dbReference type="RefSeq" id="XP_015643053.1">
    <property type="nucleotide sequence ID" value="XM_015787567.1"/>
</dbReference>
<dbReference type="SMR" id="Q655S1"/>
<dbReference type="FunCoup" id="Q655S1">
    <property type="interactions" value="418"/>
</dbReference>
<dbReference type="STRING" id="39947.Q655S1"/>
<dbReference type="MEROPS" id="M41.005"/>
<dbReference type="PaxDb" id="39947-Q655S1"/>
<dbReference type="EnsemblPlants" id="Os06t0669400-01">
    <molecule id="Q655S1-1"/>
    <property type="protein sequence ID" value="Os06t0669400-01"/>
    <property type="gene ID" value="Os06g0669400"/>
</dbReference>
<dbReference type="EnsemblPlants" id="Os06t0669400-02">
    <molecule id="Q655S1-1"/>
    <property type="protein sequence ID" value="Os06t0669400-02"/>
    <property type="gene ID" value="Os06g0669400"/>
</dbReference>
<dbReference type="Gramene" id="Os06t0669400-01">
    <molecule id="Q655S1-1"/>
    <property type="protein sequence ID" value="Os06t0669400-01"/>
    <property type="gene ID" value="Os06g0669400"/>
</dbReference>
<dbReference type="Gramene" id="Os06t0669400-02">
    <molecule id="Q655S1-1"/>
    <property type="protein sequence ID" value="Os06t0669400-02"/>
    <property type="gene ID" value="Os06g0669400"/>
</dbReference>
<dbReference type="eggNOG" id="KOG0731">
    <property type="taxonomic scope" value="Eukaryota"/>
</dbReference>
<dbReference type="HOGENOM" id="CLU_000688_16_2_1"/>
<dbReference type="InParanoid" id="Q655S1"/>
<dbReference type="OMA" id="PEEDIYC"/>
<dbReference type="OrthoDB" id="1413014at2759"/>
<dbReference type="Proteomes" id="UP000000763">
    <property type="component" value="Chromosome 6"/>
</dbReference>
<dbReference type="Proteomes" id="UP000007752">
    <property type="component" value="Chromosome 6"/>
</dbReference>
<dbReference type="Proteomes" id="UP000059680">
    <property type="component" value="Chromosome 6"/>
</dbReference>
<dbReference type="ExpressionAtlas" id="Q655S1">
    <property type="expression patterns" value="baseline and differential"/>
</dbReference>
<dbReference type="GO" id="GO:0009535">
    <property type="term" value="C:chloroplast thylakoid membrane"/>
    <property type="evidence" value="ECO:0000318"/>
    <property type="project" value="GO_Central"/>
</dbReference>
<dbReference type="GO" id="GO:0005524">
    <property type="term" value="F:ATP binding"/>
    <property type="evidence" value="ECO:0007669"/>
    <property type="project" value="UniProtKB-KW"/>
</dbReference>
<dbReference type="GO" id="GO:0016887">
    <property type="term" value="F:ATP hydrolysis activity"/>
    <property type="evidence" value="ECO:0007669"/>
    <property type="project" value="InterPro"/>
</dbReference>
<dbReference type="GO" id="GO:0004176">
    <property type="term" value="F:ATP-dependent peptidase activity"/>
    <property type="evidence" value="ECO:0000318"/>
    <property type="project" value="GO_Central"/>
</dbReference>
<dbReference type="GO" id="GO:0004222">
    <property type="term" value="F:metalloendopeptidase activity"/>
    <property type="evidence" value="ECO:0007669"/>
    <property type="project" value="InterPro"/>
</dbReference>
<dbReference type="GO" id="GO:0008270">
    <property type="term" value="F:zinc ion binding"/>
    <property type="evidence" value="ECO:0007669"/>
    <property type="project" value="InterPro"/>
</dbReference>
<dbReference type="GO" id="GO:0006508">
    <property type="term" value="P:proteolysis"/>
    <property type="evidence" value="ECO:0000318"/>
    <property type="project" value="GO_Central"/>
</dbReference>
<dbReference type="CDD" id="cd19501">
    <property type="entry name" value="RecA-like_FtsH"/>
    <property type="match status" value="1"/>
</dbReference>
<dbReference type="FunFam" id="1.10.8.60:FF:000001">
    <property type="entry name" value="ATP-dependent zinc metalloprotease FtsH"/>
    <property type="match status" value="1"/>
</dbReference>
<dbReference type="FunFam" id="3.40.50.300:FF:000001">
    <property type="entry name" value="ATP-dependent zinc metalloprotease FtsH"/>
    <property type="match status" value="1"/>
</dbReference>
<dbReference type="FunFam" id="1.20.58.760:FF:000035">
    <property type="entry name" value="ATP-dependent zinc metalloprotease FTSH 6 chloroplastic"/>
    <property type="match status" value="1"/>
</dbReference>
<dbReference type="FunFam" id="3.30.720.210:FF:000002">
    <property type="entry name" value="ATP-dependent zinc metalloprotease FTSH chloroplastic"/>
    <property type="match status" value="1"/>
</dbReference>
<dbReference type="Gene3D" id="1.10.8.60">
    <property type="match status" value="1"/>
</dbReference>
<dbReference type="Gene3D" id="3.30.720.210">
    <property type="match status" value="1"/>
</dbReference>
<dbReference type="Gene3D" id="3.40.50.300">
    <property type="entry name" value="P-loop containing nucleotide triphosphate hydrolases"/>
    <property type="match status" value="1"/>
</dbReference>
<dbReference type="Gene3D" id="1.20.58.760">
    <property type="entry name" value="Peptidase M41"/>
    <property type="match status" value="1"/>
</dbReference>
<dbReference type="HAMAP" id="MF_01458">
    <property type="entry name" value="FtsH"/>
    <property type="match status" value="1"/>
</dbReference>
<dbReference type="InterPro" id="IPR003593">
    <property type="entry name" value="AAA+_ATPase"/>
</dbReference>
<dbReference type="InterPro" id="IPR041569">
    <property type="entry name" value="AAA_lid_3"/>
</dbReference>
<dbReference type="InterPro" id="IPR003959">
    <property type="entry name" value="ATPase_AAA_core"/>
</dbReference>
<dbReference type="InterPro" id="IPR003960">
    <property type="entry name" value="ATPase_AAA_CS"/>
</dbReference>
<dbReference type="InterPro" id="IPR005936">
    <property type="entry name" value="FtsH"/>
</dbReference>
<dbReference type="InterPro" id="IPR027417">
    <property type="entry name" value="P-loop_NTPase"/>
</dbReference>
<dbReference type="InterPro" id="IPR011546">
    <property type="entry name" value="Pept_M41_FtsH_extracell"/>
</dbReference>
<dbReference type="InterPro" id="IPR000642">
    <property type="entry name" value="Peptidase_M41"/>
</dbReference>
<dbReference type="InterPro" id="IPR037219">
    <property type="entry name" value="Peptidase_M41-like"/>
</dbReference>
<dbReference type="NCBIfam" id="TIGR01241">
    <property type="entry name" value="FtsH_fam"/>
    <property type="match status" value="1"/>
</dbReference>
<dbReference type="PANTHER" id="PTHR23076:SF139">
    <property type="entry name" value="ATP-DEPENDENT ZINC METALLOPROTEASE FTSH 2, CHLOROPLASTIC"/>
    <property type="match status" value="1"/>
</dbReference>
<dbReference type="PANTHER" id="PTHR23076">
    <property type="entry name" value="METALLOPROTEASE M41 FTSH"/>
    <property type="match status" value="1"/>
</dbReference>
<dbReference type="Pfam" id="PF00004">
    <property type="entry name" value="AAA"/>
    <property type="match status" value="1"/>
</dbReference>
<dbReference type="Pfam" id="PF17862">
    <property type="entry name" value="AAA_lid_3"/>
    <property type="match status" value="1"/>
</dbReference>
<dbReference type="Pfam" id="PF06480">
    <property type="entry name" value="FtsH_ext"/>
    <property type="match status" value="1"/>
</dbReference>
<dbReference type="Pfam" id="PF01434">
    <property type="entry name" value="Peptidase_M41"/>
    <property type="match status" value="1"/>
</dbReference>
<dbReference type="SMART" id="SM00382">
    <property type="entry name" value="AAA"/>
    <property type="match status" value="1"/>
</dbReference>
<dbReference type="SUPFAM" id="SSF140990">
    <property type="entry name" value="FtsH protease domain-like"/>
    <property type="match status" value="1"/>
</dbReference>
<dbReference type="SUPFAM" id="SSF52540">
    <property type="entry name" value="P-loop containing nucleoside triphosphate hydrolases"/>
    <property type="match status" value="1"/>
</dbReference>
<dbReference type="PROSITE" id="PS00674">
    <property type="entry name" value="AAA"/>
    <property type="match status" value="1"/>
</dbReference>
<organism>
    <name type="scientific">Oryza sativa subsp. japonica</name>
    <name type="common">Rice</name>
    <dbReference type="NCBI Taxonomy" id="39947"/>
    <lineage>
        <taxon>Eukaryota</taxon>
        <taxon>Viridiplantae</taxon>
        <taxon>Streptophyta</taxon>
        <taxon>Embryophyta</taxon>
        <taxon>Tracheophyta</taxon>
        <taxon>Spermatophyta</taxon>
        <taxon>Magnoliopsida</taxon>
        <taxon>Liliopsida</taxon>
        <taxon>Poales</taxon>
        <taxon>Poaceae</taxon>
        <taxon>BOP clade</taxon>
        <taxon>Oryzoideae</taxon>
        <taxon>Oryzeae</taxon>
        <taxon>Oryzinae</taxon>
        <taxon>Oryza</taxon>
        <taxon>Oryza sativa</taxon>
    </lineage>
</organism>
<sequence>MAPTSMSLAAKTPLPFSTLPSSGVAQRPVSVTASLEHKTNDARRKFLKLALGNLGVGLPTLLGAKRALAEEQGVSSSRMSYSRFLEYLDKDRVKKVDLFENGTIAIVEAISPELGNRVQRVRVQLPGLSQELLQKLREKNIDFAAHSNQEDSGSLLFNLIGNLAFPLILIGGLFLLSRRAQGGLGGPNGPGFPLGFGQSRAKFQMEPNTGVTFDDVAGVDEAKQDFMEVVEFLKKPERFTAVGARIPKGVLLVGPPGTGKTLLAKAIAGEAGVPFFSISGSEFVEMFVGVGASRVRDLFKKAKENAPCIVFVDEIDAVGRQRGTGIGGGNDEREQTLNQLLTEMDGFEGNTGIIVIAATNRADILDSALLRPGRFDRQVSVDVPDVRGRTEILKVHGSNKKFDTDVSLEVIAMRTPGFSGADLANLLNEAAILAGRRGRTAISSKEIDDSIDRIVAGMEGTVMTDGKSKSLVAYHEVGHAICGTLTPGHDPVQKVTLIPRGQARGLTWFIPMDDPTLISRQQLFARIVGGLGGRAAEEIIFGEPEVTTGAAGDLQQITGLAKQMVVTFGMSDIGPWSLMDSGAQSGDVIMRMMARNSMSEKLAEDIDTAVKRLSDEAYEIALSQIRSNREAMDKIVEVLLEKETLSGDEFRAILSEFTEIPVENRVPPATPAALPA</sequence>
<evidence type="ECO:0000250" key="1"/>
<evidence type="ECO:0000255" key="2"/>
<evidence type="ECO:0000305" key="3"/>
<keyword id="KW-0025">Alternative splicing</keyword>
<keyword id="KW-0067">ATP-binding</keyword>
<keyword id="KW-0150">Chloroplast</keyword>
<keyword id="KW-0378">Hydrolase</keyword>
<keyword id="KW-0472">Membrane</keyword>
<keyword id="KW-0479">Metal-binding</keyword>
<keyword id="KW-0482">Metalloprotease</keyword>
<keyword id="KW-0547">Nucleotide-binding</keyword>
<keyword id="KW-0934">Plastid</keyword>
<keyword id="KW-0645">Protease</keyword>
<keyword id="KW-1185">Reference proteome</keyword>
<keyword id="KW-0793">Thylakoid</keyword>
<keyword id="KW-0809">Transit peptide</keyword>
<keyword id="KW-0812">Transmembrane</keyword>
<keyword id="KW-1133">Transmembrane helix</keyword>
<keyword id="KW-0862">Zinc</keyword>
<accession>Q655S1</accession>
<accession>A0A0P0X054</accession>
<accession>Q655S0</accession>
<comment type="function">
    <text evidence="1">Probable ATP-dependent zinc metallopeptidase.</text>
</comment>
<comment type="cofactor">
    <cofactor evidence="1">
        <name>Zn(2+)</name>
        <dbReference type="ChEBI" id="CHEBI:29105"/>
    </cofactor>
    <text evidence="1">Binds 1 zinc ion per subunit.</text>
</comment>
<comment type="subcellular location">
    <subcellularLocation>
        <location evidence="1">Plastid</location>
        <location evidence="1">Chloroplast thylakoid membrane</location>
        <topology evidence="1">Single-pass membrane protein</topology>
        <orientation evidence="1">Stromal side</orientation>
    </subcellularLocation>
</comment>
<comment type="alternative products">
    <event type="alternative splicing"/>
    <isoform>
        <id>Q655S1-1</id>
        <name>1</name>
        <sequence type="displayed"/>
    </isoform>
    <text>A number of isoforms are produced. According to EST sequences.</text>
</comment>
<comment type="similarity">
    <text evidence="3">In the N-terminal section; belongs to the AAA ATPase family.</text>
</comment>
<comment type="similarity">
    <text evidence="3">In the C-terminal section; belongs to the peptidase M41 family.</text>
</comment>
<feature type="transit peptide" description="Chloroplast" evidence="2">
    <location>
        <begin position="1"/>
        <end position="32"/>
    </location>
</feature>
<feature type="transit peptide" description="Thylakoid" evidence="2">
    <location>
        <begin position="33"/>
        <end status="unknown"/>
    </location>
</feature>
<feature type="chain" id="PRO_0000341338" description="ATP-dependent zinc metalloprotease FTSH 2, chloroplastic">
    <location>
        <begin status="unknown"/>
        <end position="676"/>
    </location>
</feature>
<feature type="transmembrane region" description="Helical" evidence="2">
    <location>
        <begin position="155"/>
        <end position="175"/>
    </location>
</feature>
<feature type="active site" evidence="1">
    <location>
        <position position="476"/>
    </location>
</feature>
<feature type="binding site" evidence="2">
    <location>
        <begin position="254"/>
        <end position="261"/>
    </location>
    <ligand>
        <name>ATP</name>
        <dbReference type="ChEBI" id="CHEBI:30616"/>
    </ligand>
</feature>
<feature type="binding site" evidence="1">
    <location>
        <position position="475"/>
    </location>
    <ligand>
        <name>Zn(2+)</name>
        <dbReference type="ChEBI" id="CHEBI:29105"/>
        <note>catalytic</note>
    </ligand>
</feature>
<feature type="binding site" evidence="1">
    <location>
        <position position="479"/>
    </location>
    <ligand>
        <name>Zn(2+)</name>
        <dbReference type="ChEBI" id="CHEBI:29105"/>
        <note>catalytic</note>
    </ligand>
</feature>
<feature type="binding site" evidence="1">
    <location>
        <position position="553"/>
    </location>
    <ligand>
        <name>Zn(2+)</name>
        <dbReference type="ChEBI" id="CHEBI:29105"/>
        <note>catalytic</note>
    </ligand>
</feature>
<reference key="1">
    <citation type="journal article" date="2005" name="Nature">
        <title>The map-based sequence of the rice genome.</title>
        <authorList>
            <consortium name="International rice genome sequencing project (IRGSP)"/>
        </authorList>
    </citation>
    <scope>NUCLEOTIDE SEQUENCE [LARGE SCALE GENOMIC DNA]</scope>
    <source>
        <strain>cv. Nipponbare</strain>
    </source>
</reference>
<reference key="2">
    <citation type="journal article" date="2013" name="Rice">
        <title>Improvement of the Oryza sativa Nipponbare reference genome using next generation sequence and optical map data.</title>
        <authorList>
            <person name="Kawahara Y."/>
            <person name="de la Bastide M."/>
            <person name="Hamilton J.P."/>
            <person name="Kanamori H."/>
            <person name="McCombie W.R."/>
            <person name="Ouyang S."/>
            <person name="Schwartz D.C."/>
            <person name="Tanaka T."/>
            <person name="Wu J."/>
            <person name="Zhou S."/>
            <person name="Childs K.L."/>
            <person name="Davidson R.M."/>
            <person name="Lin H."/>
            <person name="Quesada-Ocampo L."/>
            <person name="Vaillancourt B."/>
            <person name="Sakai H."/>
            <person name="Lee S.S."/>
            <person name="Kim J."/>
            <person name="Numa H."/>
            <person name="Itoh T."/>
            <person name="Buell C.R."/>
            <person name="Matsumoto T."/>
        </authorList>
    </citation>
    <scope>GENOME REANNOTATION</scope>
    <source>
        <strain>cv. Nipponbare</strain>
    </source>
</reference>
<reference key="3">
    <citation type="journal article" date="2005" name="PLoS Biol.">
        <title>The genomes of Oryza sativa: a history of duplications.</title>
        <authorList>
            <person name="Yu J."/>
            <person name="Wang J."/>
            <person name="Lin W."/>
            <person name="Li S."/>
            <person name="Li H."/>
            <person name="Zhou J."/>
            <person name="Ni P."/>
            <person name="Dong W."/>
            <person name="Hu S."/>
            <person name="Zeng C."/>
            <person name="Zhang J."/>
            <person name="Zhang Y."/>
            <person name="Li R."/>
            <person name="Xu Z."/>
            <person name="Li S."/>
            <person name="Li X."/>
            <person name="Zheng H."/>
            <person name="Cong L."/>
            <person name="Lin L."/>
            <person name="Yin J."/>
            <person name="Geng J."/>
            <person name="Li G."/>
            <person name="Shi J."/>
            <person name="Liu J."/>
            <person name="Lv H."/>
            <person name="Li J."/>
            <person name="Wang J."/>
            <person name="Deng Y."/>
            <person name="Ran L."/>
            <person name="Shi X."/>
            <person name="Wang X."/>
            <person name="Wu Q."/>
            <person name="Li C."/>
            <person name="Ren X."/>
            <person name="Wang J."/>
            <person name="Wang X."/>
            <person name="Li D."/>
            <person name="Liu D."/>
            <person name="Zhang X."/>
            <person name="Ji Z."/>
            <person name="Zhao W."/>
            <person name="Sun Y."/>
            <person name="Zhang Z."/>
            <person name="Bao J."/>
            <person name="Han Y."/>
            <person name="Dong L."/>
            <person name="Ji J."/>
            <person name="Chen P."/>
            <person name="Wu S."/>
            <person name="Liu J."/>
            <person name="Xiao Y."/>
            <person name="Bu D."/>
            <person name="Tan J."/>
            <person name="Yang L."/>
            <person name="Ye C."/>
            <person name="Zhang J."/>
            <person name="Xu J."/>
            <person name="Zhou Y."/>
            <person name="Yu Y."/>
            <person name="Zhang B."/>
            <person name="Zhuang S."/>
            <person name="Wei H."/>
            <person name="Liu B."/>
            <person name="Lei M."/>
            <person name="Yu H."/>
            <person name="Li Y."/>
            <person name="Xu H."/>
            <person name="Wei S."/>
            <person name="He X."/>
            <person name="Fang L."/>
            <person name="Zhang Z."/>
            <person name="Zhang Y."/>
            <person name="Huang X."/>
            <person name="Su Z."/>
            <person name="Tong W."/>
            <person name="Li J."/>
            <person name="Tong Z."/>
            <person name="Li S."/>
            <person name="Ye J."/>
            <person name="Wang L."/>
            <person name="Fang L."/>
            <person name="Lei T."/>
            <person name="Chen C.-S."/>
            <person name="Chen H.-C."/>
            <person name="Xu Z."/>
            <person name="Li H."/>
            <person name="Huang H."/>
            <person name="Zhang F."/>
            <person name="Xu H."/>
            <person name="Li N."/>
            <person name="Zhao C."/>
            <person name="Li S."/>
            <person name="Dong L."/>
            <person name="Huang Y."/>
            <person name="Li L."/>
            <person name="Xi Y."/>
            <person name="Qi Q."/>
            <person name="Li W."/>
            <person name="Zhang B."/>
            <person name="Hu W."/>
            <person name="Zhang Y."/>
            <person name="Tian X."/>
            <person name="Jiao Y."/>
            <person name="Liang X."/>
            <person name="Jin J."/>
            <person name="Gao L."/>
            <person name="Zheng W."/>
            <person name="Hao B."/>
            <person name="Liu S.-M."/>
            <person name="Wang W."/>
            <person name="Yuan L."/>
            <person name="Cao M."/>
            <person name="McDermott J."/>
            <person name="Samudrala R."/>
            <person name="Wang J."/>
            <person name="Wong G.K.-S."/>
            <person name="Yang H."/>
        </authorList>
    </citation>
    <scope>NUCLEOTIDE SEQUENCE [LARGE SCALE GENOMIC DNA]</scope>
    <source>
        <strain>cv. Nipponbare</strain>
    </source>
</reference>
<reference key="4">
    <citation type="journal article" date="2005" name="Plant Physiol.">
        <title>Functional redundancy of AtFtsH metalloproteases in thylakoid membrane complexes.</title>
        <authorList>
            <person name="Yu F."/>
            <person name="Park S."/>
            <person name="Rodermel S.R."/>
        </authorList>
    </citation>
    <scope>GENE FAMILY</scope>
    <scope>NOMENCLATURE</scope>
</reference>